<accession>Q10370</accession>
<sequence length="152" mass="16202">ALNEADGSNKSAISKYIETTYGELPDETVLGSHLNKMKESGELAFKQNNYMKADPNAPPKRGRGRPPKPKVPLPPGTVVSPPRPRGRPPKDPNAPPKSPKAKATPATGRPRGRPKKVARSPAVPSPTAVSTGRPRGRPPKVKPQLTEVSVES</sequence>
<proteinExistence type="evidence at transcript level"/>
<feature type="chain" id="PRO_0000206714" description="HMG-Y-related protein B">
    <location>
        <begin position="1" status="less than"/>
        <end position="152"/>
    </location>
</feature>
<feature type="domain" description="H15" evidence="1">
    <location>
        <begin position="1"/>
        <end position="54"/>
    </location>
</feature>
<feature type="DNA-binding region" description="A.T hook 1">
    <location>
        <begin position="60"/>
        <end position="68"/>
    </location>
</feature>
<feature type="DNA-binding region" description="A.T hook 2">
    <location>
        <begin position="82"/>
        <end position="90"/>
    </location>
</feature>
<feature type="DNA-binding region" description="A.T hook 3">
    <location>
        <begin position="108"/>
        <end position="116"/>
    </location>
</feature>
<feature type="DNA-binding region" description="A.T hook 4">
    <location>
        <begin position="132"/>
        <end position="140"/>
    </location>
</feature>
<feature type="region of interest" description="Disordered" evidence="2">
    <location>
        <begin position="40"/>
        <end position="152"/>
    </location>
</feature>
<feature type="non-terminal residue">
    <location>
        <position position="1"/>
    </location>
</feature>
<comment type="subcellular location">
    <subcellularLocation>
        <location evidence="1">Nucleus</location>
    </subcellularLocation>
</comment>
<comment type="similarity">
    <text evidence="3">Belongs to the HMGA family.</text>
</comment>
<protein>
    <recommendedName>
        <fullName>HMG-Y-related protein B</fullName>
    </recommendedName>
    <alternativeName>
        <fullName>Protein SB16B</fullName>
    </alternativeName>
</protein>
<reference key="1">
    <citation type="journal article" date="1991" name="Nucleic Acids Res.">
        <title>A soybean embryo cDNA encodes a DNA binding protein with histone and HMG-protein-like domains.</title>
        <authorList>
            <person name="Laux T."/>
            <person name="Seurinck J."/>
            <person name="Goldberg R.B."/>
        </authorList>
    </citation>
    <scope>NUCLEOTIDE SEQUENCE [MRNA]</scope>
    <source>
        <strain>cv. Dare</strain>
        <tissue>Embryo</tissue>
    </source>
</reference>
<evidence type="ECO:0000255" key="1">
    <source>
        <dbReference type="PROSITE-ProRule" id="PRU00837"/>
    </source>
</evidence>
<evidence type="ECO:0000256" key="2">
    <source>
        <dbReference type="SAM" id="MobiDB-lite"/>
    </source>
</evidence>
<evidence type="ECO:0000305" key="3"/>
<organism>
    <name type="scientific">Glycine max</name>
    <name type="common">Soybean</name>
    <name type="synonym">Glycine hispida</name>
    <dbReference type="NCBI Taxonomy" id="3847"/>
    <lineage>
        <taxon>Eukaryota</taxon>
        <taxon>Viridiplantae</taxon>
        <taxon>Streptophyta</taxon>
        <taxon>Embryophyta</taxon>
        <taxon>Tracheophyta</taxon>
        <taxon>Spermatophyta</taxon>
        <taxon>Magnoliopsida</taxon>
        <taxon>eudicotyledons</taxon>
        <taxon>Gunneridae</taxon>
        <taxon>Pentapetalae</taxon>
        <taxon>rosids</taxon>
        <taxon>fabids</taxon>
        <taxon>Fabales</taxon>
        <taxon>Fabaceae</taxon>
        <taxon>Papilionoideae</taxon>
        <taxon>50 kb inversion clade</taxon>
        <taxon>NPAAA clade</taxon>
        <taxon>indigoferoid/millettioid clade</taxon>
        <taxon>Phaseoleae</taxon>
        <taxon>Glycine</taxon>
        <taxon>Glycine subgen. Soja</taxon>
    </lineage>
</organism>
<dbReference type="EMBL" id="X58244">
    <property type="protein sequence ID" value="CAA41199.1"/>
    <property type="molecule type" value="mRNA"/>
</dbReference>
<dbReference type="PIR" id="S22311">
    <property type="entry name" value="S22311"/>
</dbReference>
<dbReference type="SMR" id="Q10370"/>
<dbReference type="FunCoup" id="Q10370">
    <property type="interactions" value="347"/>
</dbReference>
<dbReference type="PaxDb" id="3847-GLYMA14G39600.1"/>
<dbReference type="eggNOG" id="ENOG502RXFH">
    <property type="taxonomic scope" value="Eukaryota"/>
</dbReference>
<dbReference type="InParanoid" id="Q10370"/>
<dbReference type="Proteomes" id="UP000008827">
    <property type="component" value="Unplaced"/>
</dbReference>
<dbReference type="GO" id="GO:0005730">
    <property type="term" value="C:nucleolus"/>
    <property type="evidence" value="ECO:0000318"/>
    <property type="project" value="GO_Central"/>
</dbReference>
<dbReference type="GO" id="GO:0000786">
    <property type="term" value="C:nucleosome"/>
    <property type="evidence" value="ECO:0007669"/>
    <property type="project" value="InterPro"/>
</dbReference>
<dbReference type="GO" id="GO:0005634">
    <property type="term" value="C:nucleus"/>
    <property type="evidence" value="ECO:0000318"/>
    <property type="project" value="GO_Central"/>
</dbReference>
<dbReference type="GO" id="GO:0003690">
    <property type="term" value="F:double-stranded DNA binding"/>
    <property type="evidence" value="ECO:0000318"/>
    <property type="project" value="GO_Central"/>
</dbReference>
<dbReference type="GO" id="GO:0008168">
    <property type="term" value="F:methyltransferase activity"/>
    <property type="evidence" value="ECO:0007669"/>
    <property type="project" value="UniProtKB-ARBA"/>
</dbReference>
<dbReference type="GO" id="GO:0031492">
    <property type="term" value="F:nucleosomal DNA binding"/>
    <property type="evidence" value="ECO:0000318"/>
    <property type="project" value="GO_Central"/>
</dbReference>
<dbReference type="GO" id="GO:0030261">
    <property type="term" value="P:chromosome condensation"/>
    <property type="evidence" value="ECO:0000318"/>
    <property type="project" value="GO_Central"/>
</dbReference>
<dbReference type="GO" id="GO:0045910">
    <property type="term" value="P:negative regulation of DNA recombination"/>
    <property type="evidence" value="ECO:0000318"/>
    <property type="project" value="GO_Central"/>
</dbReference>
<dbReference type="GO" id="GO:0006334">
    <property type="term" value="P:nucleosome assembly"/>
    <property type="evidence" value="ECO:0007669"/>
    <property type="project" value="InterPro"/>
</dbReference>
<dbReference type="GO" id="GO:0006355">
    <property type="term" value="P:regulation of DNA-templated transcription"/>
    <property type="evidence" value="ECO:0007669"/>
    <property type="project" value="InterPro"/>
</dbReference>
<dbReference type="Gene3D" id="1.10.10.10">
    <property type="entry name" value="Winged helix-like DNA-binding domain superfamily/Winged helix DNA-binding domain"/>
    <property type="match status" value="1"/>
</dbReference>
<dbReference type="InterPro" id="IPR017956">
    <property type="entry name" value="AT_hook_DNA-bd_motif"/>
</dbReference>
<dbReference type="InterPro" id="IPR005818">
    <property type="entry name" value="Histone_H1/H5_H15"/>
</dbReference>
<dbReference type="InterPro" id="IPR000116">
    <property type="entry name" value="HMGA"/>
</dbReference>
<dbReference type="InterPro" id="IPR036388">
    <property type="entry name" value="WH-like_DNA-bd_sf"/>
</dbReference>
<dbReference type="InterPro" id="IPR036390">
    <property type="entry name" value="WH_DNA-bd_sf"/>
</dbReference>
<dbReference type="PANTHER" id="PTHR11467">
    <property type="entry name" value="HISTONE H1"/>
    <property type="match status" value="1"/>
</dbReference>
<dbReference type="PANTHER" id="PTHR11467:SF162">
    <property type="entry name" value="HMG-Y-RELATED PROTEIN A"/>
    <property type="match status" value="1"/>
</dbReference>
<dbReference type="PRINTS" id="PR00929">
    <property type="entry name" value="ATHOOK"/>
</dbReference>
<dbReference type="PRINTS" id="PR00930">
    <property type="entry name" value="HIGHMOBLTYIY"/>
</dbReference>
<dbReference type="SMART" id="SM00384">
    <property type="entry name" value="AT_hook"/>
    <property type="match status" value="4"/>
</dbReference>
<dbReference type="SMART" id="SM00526">
    <property type="entry name" value="H15"/>
    <property type="match status" value="1"/>
</dbReference>
<dbReference type="SUPFAM" id="SSF46785">
    <property type="entry name" value="Winged helix' DNA-binding domain"/>
    <property type="match status" value="1"/>
</dbReference>
<dbReference type="PROSITE" id="PS51504">
    <property type="entry name" value="H15"/>
    <property type="match status" value="1"/>
</dbReference>
<name>HMGYB_SOYBN</name>
<keyword id="KW-0238">DNA-binding</keyword>
<keyword id="KW-0539">Nucleus</keyword>
<keyword id="KW-1185">Reference proteome</keyword>
<keyword id="KW-0677">Repeat</keyword>